<name>GRPE_THEAC</name>
<protein>
    <recommendedName>
        <fullName evidence="1">Protein GrpE</fullName>
    </recommendedName>
    <alternativeName>
        <fullName evidence="1">HSP-70 cofactor</fullName>
    </alternativeName>
</protein>
<keyword id="KW-0143">Chaperone</keyword>
<keyword id="KW-0963">Cytoplasm</keyword>
<keyword id="KW-1185">Reference proteome</keyword>
<keyword id="KW-0346">Stress response</keyword>
<comment type="function">
    <text evidence="1">Participates actively in the response to hyperosmotic and heat shock by preventing the aggregation of stress-denatured proteins, in association with DnaK and GrpE. It is the nucleotide exchange factor for DnaK and may function as a thermosensor. Unfolded proteins bind initially to DnaJ; upon interaction with the DnaJ-bound protein, DnaK hydrolyzes its bound ATP, resulting in the formation of a stable complex. GrpE releases ADP from DnaK; ATP binding to DnaK triggers the release of the substrate protein, thus completing the reaction cycle. Several rounds of ATP-dependent interactions between DnaJ, DnaK and GrpE are required for fully efficient folding.</text>
</comment>
<comment type="subunit">
    <text evidence="1">Homodimer.</text>
</comment>
<comment type="subcellular location">
    <subcellularLocation>
        <location evidence="1">Cytoplasm</location>
    </subcellularLocation>
</comment>
<comment type="similarity">
    <text evidence="1">Belongs to the GrpE family.</text>
</comment>
<organism>
    <name type="scientific">Thermoplasma acidophilum (strain ATCC 25905 / DSM 1728 / JCM 9062 / NBRC 15155 / AMRC-C165)</name>
    <dbReference type="NCBI Taxonomy" id="273075"/>
    <lineage>
        <taxon>Archaea</taxon>
        <taxon>Methanobacteriati</taxon>
        <taxon>Thermoplasmatota</taxon>
        <taxon>Thermoplasmata</taxon>
        <taxon>Thermoplasmatales</taxon>
        <taxon>Thermoplasmataceae</taxon>
        <taxon>Thermoplasma</taxon>
    </lineage>
</organism>
<reference key="1">
    <citation type="journal article" date="2000" name="Nature">
        <title>The genome sequence of the thermoacidophilic scavenger Thermoplasma acidophilum.</title>
        <authorList>
            <person name="Ruepp A."/>
            <person name="Graml W."/>
            <person name="Santos-Martinez M.-L."/>
            <person name="Koretke K.K."/>
            <person name="Volker C."/>
            <person name="Mewes H.-W."/>
            <person name="Frishman D."/>
            <person name="Stocker S."/>
            <person name="Lupas A.N."/>
            <person name="Baumeister W."/>
        </authorList>
    </citation>
    <scope>NUCLEOTIDE SEQUENCE [LARGE SCALE GENOMIC DNA]</scope>
    <source>
        <strain>ATCC 25905 / DSM 1728 / JCM 9062 / NBRC 15155 / AMRC-C165</strain>
    </source>
</reference>
<accession>Q9HJ84</accession>
<feature type="chain" id="PRO_0000113912" description="Protein GrpE">
    <location>
        <begin position="1"/>
        <end position="175"/>
    </location>
</feature>
<dbReference type="EMBL" id="AL445066">
    <property type="protein sequence ID" value="CAC12214.1"/>
    <property type="molecule type" value="Genomic_DNA"/>
</dbReference>
<dbReference type="RefSeq" id="WP_010901496.1">
    <property type="nucleotide sequence ID" value="NC_002578.1"/>
</dbReference>
<dbReference type="SMR" id="Q9HJ84"/>
<dbReference type="STRING" id="273075.gene:9572307"/>
<dbReference type="PaxDb" id="273075-Ta1086"/>
<dbReference type="EnsemblBacteria" id="CAC12214">
    <property type="protein sequence ID" value="CAC12214"/>
    <property type="gene ID" value="CAC12214"/>
</dbReference>
<dbReference type="KEGG" id="tac:Ta1086"/>
<dbReference type="eggNOG" id="arCOG04772">
    <property type="taxonomic scope" value="Archaea"/>
</dbReference>
<dbReference type="HOGENOM" id="CLU_057217_5_2_2"/>
<dbReference type="InParanoid" id="Q9HJ84"/>
<dbReference type="OrthoDB" id="56041at2157"/>
<dbReference type="Proteomes" id="UP000001024">
    <property type="component" value="Chromosome"/>
</dbReference>
<dbReference type="GO" id="GO:0005737">
    <property type="term" value="C:cytoplasm"/>
    <property type="evidence" value="ECO:0007669"/>
    <property type="project" value="UniProtKB-SubCell"/>
</dbReference>
<dbReference type="GO" id="GO:0000774">
    <property type="term" value="F:adenyl-nucleotide exchange factor activity"/>
    <property type="evidence" value="ECO:0007669"/>
    <property type="project" value="InterPro"/>
</dbReference>
<dbReference type="GO" id="GO:0042803">
    <property type="term" value="F:protein homodimerization activity"/>
    <property type="evidence" value="ECO:0007669"/>
    <property type="project" value="InterPro"/>
</dbReference>
<dbReference type="GO" id="GO:0051087">
    <property type="term" value="F:protein-folding chaperone binding"/>
    <property type="evidence" value="ECO:0007669"/>
    <property type="project" value="InterPro"/>
</dbReference>
<dbReference type="GO" id="GO:0051082">
    <property type="term" value="F:unfolded protein binding"/>
    <property type="evidence" value="ECO:0007669"/>
    <property type="project" value="TreeGrafter"/>
</dbReference>
<dbReference type="GO" id="GO:0006457">
    <property type="term" value="P:protein folding"/>
    <property type="evidence" value="ECO:0007669"/>
    <property type="project" value="InterPro"/>
</dbReference>
<dbReference type="CDD" id="cd00446">
    <property type="entry name" value="GrpE"/>
    <property type="match status" value="1"/>
</dbReference>
<dbReference type="Gene3D" id="3.90.20.20">
    <property type="match status" value="1"/>
</dbReference>
<dbReference type="Gene3D" id="2.30.22.10">
    <property type="entry name" value="Head domain of nucleotide exchange factor GrpE"/>
    <property type="match status" value="1"/>
</dbReference>
<dbReference type="HAMAP" id="MF_01151">
    <property type="entry name" value="GrpE"/>
    <property type="match status" value="1"/>
</dbReference>
<dbReference type="InterPro" id="IPR000740">
    <property type="entry name" value="GrpE"/>
</dbReference>
<dbReference type="InterPro" id="IPR013805">
    <property type="entry name" value="GrpE_coiled_coil"/>
</dbReference>
<dbReference type="InterPro" id="IPR009012">
    <property type="entry name" value="GrpE_head"/>
</dbReference>
<dbReference type="PANTHER" id="PTHR21237">
    <property type="entry name" value="GRPE PROTEIN"/>
    <property type="match status" value="1"/>
</dbReference>
<dbReference type="PANTHER" id="PTHR21237:SF23">
    <property type="entry name" value="GRPE PROTEIN HOMOLOG, MITOCHONDRIAL"/>
    <property type="match status" value="1"/>
</dbReference>
<dbReference type="Pfam" id="PF01025">
    <property type="entry name" value="GrpE"/>
    <property type="match status" value="1"/>
</dbReference>
<dbReference type="PRINTS" id="PR00773">
    <property type="entry name" value="GRPEPROTEIN"/>
</dbReference>
<dbReference type="SUPFAM" id="SSF58014">
    <property type="entry name" value="Coiled-coil domain of nucleotide exchange factor GrpE"/>
    <property type="match status" value="1"/>
</dbReference>
<dbReference type="SUPFAM" id="SSF51064">
    <property type="entry name" value="Head domain of nucleotide exchange factor GrpE"/>
    <property type="match status" value="1"/>
</dbReference>
<dbReference type="PROSITE" id="PS01071">
    <property type="entry name" value="GRPE"/>
    <property type="match status" value="1"/>
</dbReference>
<proteinExistence type="inferred from homology"/>
<evidence type="ECO:0000255" key="1">
    <source>
        <dbReference type="HAMAP-Rule" id="MF_01151"/>
    </source>
</evidence>
<gene>
    <name evidence="1" type="primary">grpE</name>
    <name type="ordered locus">Ta1086</name>
</gene>
<sequence>MQPTPSEYARTPVRIEMQRSKERNSMVYKEMYNDAQRKYSEALDRISKLTDAYLREKAEVENFIKIKDREVEMSKKNANEKLLKDFLPVLDSIDAAIQAEKDNNLIRIRDQMLGVLSRYGLKPIKAEGSKFDPYLHEVVGVTADGEDGMVKYEVQRGYTLNDGVLRTSKVIVVKR</sequence>